<proteinExistence type="inferred from homology"/>
<reference key="1">
    <citation type="journal article" date="2007" name="Proc. Natl. Acad. Sci. U.S.A.">
        <title>Independent sorting-out of thousands of duplicated gene pairs in two yeast species descended from a whole-genome duplication.</title>
        <authorList>
            <person name="Scannell D.R."/>
            <person name="Frank A.C."/>
            <person name="Conant G.C."/>
            <person name="Byrne K.P."/>
            <person name="Woolfit M."/>
            <person name="Wolfe K.H."/>
        </authorList>
    </citation>
    <scope>NUCLEOTIDE SEQUENCE [LARGE SCALE GENOMIC DNA]</scope>
    <source>
        <strain>ATCC 22028 / DSM 70294 / BCRC 21397 / CBS 2163 / NBRC 10782 / NRRL Y-8283 / UCD 57-17</strain>
    </source>
</reference>
<evidence type="ECO:0000250" key="1">
    <source>
        <dbReference type="UniProtKB" id="P40562"/>
    </source>
</evidence>
<evidence type="ECO:0000250" key="2">
    <source>
        <dbReference type="UniProtKB" id="Q9UT23"/>
    </source>
</evidence>
<evidence type="ECO:0000255" key="3">
    <source>
        <dbReference type="PROSITE-ProRule" id="PRU00541"/>
    </source>
</evidence>
<evidence type="ECO:0000255" key="4">
    <source>
        <dbReference type="PROSITE-ProRule" id="PRU00542"/>
    </source>
</evidence>
<evidence type="ECO:0000256" key="5">
    <source>
        <dbReference type="SAM" id="MobiDB-lite"/>
    </source>
</evidence>
<evidence type="ECO:0000305" key="6"/>
<comment type="function">
    <text evidence="2">ATP-dependent DNA helicase involved in DNA damage repair by homologous recombination and in genome maintenance. Capable of unwinding D-loops. Plays a role in limiting crossover recombinants during mitotic DNA double-strand break (DSB) repair. Component of a FANCM-MHF complex which promotes gene conversion at blocked replication forks, probably by reversal of the stalled fork.</text>
</comment>
<comment type="catalytic activity">
    <reaction evidence="2">
        <text>ATP + H2O = ADP + phosphate + H(+)</text>
        <dbReference type="Rhea" id="RHEA:13065"/>
        <dbReference type="ChEBI" id="CHEBI:15377"/>
        <dbReference type="ChEBI" id="CHEBI:15378"/>
        <dbReference type="ChEBI" id="CHEBI:30616"/>
        <dbReference type="ChEBI" id="CHEBI:43474"/>
        <dbReference type="ChEBI" id="CHEBI:456216"/>
        <dbReference type="EC" id="3.6.4.12"/>
    </reaction>
</comment>
<comment type="subunit">
    <text evidence="2">Interacts with the MHF histone-fold complex to form the FANCM-MHF complex.</text>
</comment>
<comment type="subcellular location">
    <subcellularLocation>
        <location evidence="1">Nucleus</location>
    </subcellularLocation>
</comment>
<comment type="similarity">
    <text evidence="6">Belongs to the DEAD box helicase family. DEAH subfamily. FANCM sub-subfamily.</text>
</comment>
<accession>A7TSV4</accession>
<organism>
    <name type="scientific">Vanderwaltozyma polyspora (strain ATCC 22028 / DSM 70294 / BCRC 21397 / CBS 2163 / NBRC 10782 / NRRL Y-8283 / UCD 57-17)</name>
    <name type="common">Kluyveromyces polysporus</name>
    <dbReference type="NCBI Taxonomy" id="436907"/>
    <lineage>
        <taxon>Eukaryota</taxon>
        <taxon>Fungi</taxon>
        <taxon>Dikarya</taxon>
        <taxon>Ascomycota</taxon>
        <taxon>Saccharomycotina</taxon>
        <taxon>Saccharomycetes</taxon>
        <taxon>Saccharomycetales</taxon>
        <taxon>Saccharomycetaceae</taxon>
        <taxon>Vanderwaltozyma</taxon>
    </lineage>
</organism>
<name>MPH1_VANPO</name>
<sequence length="1012" mass="115737">MQAGNNGGAKLKNDEFDNLYQKNINRRETETVIRRSIPVQRDLTGKILPNQVAYYEEIEREVTFGATHHILDKDNFDSYIYPTNFEVREYQFNIVQKSLYQNTLCAIPTGMGKTFIASTVMLNFFRWSKNGKIIFTAPTRPLVAQQIKACLGITGIPHDQAAILLDKSRKNREDIWTQKRVFFTTPQVIENDLKRGVLNPKDIICLVFDEAHRATGSYAYTNVVKFIDRFNSSYRILALTATPGTDIASVQEVVNNLNISNIEIRTEESMDIIRYMKKRYKEKIEIGLTTEIEMIIEQLGIAVKPVLQQAVELGIYDECHPSQINSFVAMQKSQQIIANPTIAEGIKWRNFFILQLLNHVGQMLKRIKIYGIRSFYGYFRNKFSEFTTKYNMGKSTNKIAASFYYHPILKILMKNCDVYTSNSSFIGHDKLQKIINELSDFFLNSRLDSRVIIFTELRESALEIVKTIDNMGSSSIRPHIFIGQARGKENFDDEGFIRKNKPKGRKKADRLKRLEEDKQKQLSKAKQKEQEKVERSSRRTGSSEEAQISGMNQKQQKEVISKFKNGDYNVLVCTSIGEEGLDIGEVDMIICFDTTGSPIKNIQRMGRTGRKRDGKILLLFSGNESRKFEKAMEDYYDLQRLIGQNFVEYKKSDRILPSNITPECRKEFIHISAENNELNNMEDSDEVIRYATQCMLGKVPKSKKSKAKAAKEPKGKSKTFFMPDNVETGIVSAIALVNKKKSNSNESETVIKTECFPNLDDIEKDMLASLSSPVKPEVDDYKDGTFQKTDRFEEKITGSNLKDMLMSFSKRDEESKVTSFSSDGNYVNEPFGNISLGEKLDINDDFASTPIVKADMNIGQYDRSLIENNSRGGVLFKNAFEKEEGLLKKSEKVYFRDHYSIDNTVVIEPIPNFKRYNKSCLINHNPQVENILNLFKGINENKTQITIEMNRSRCIARGIEKGSIQLTGSDFSLANVMVAQKNNEADIVWDTSKTNKNSHENLNELLDSDSDF</sequence>
<keyword id="KW-0067">ATP-binding</keyword>
<keyword id="KW-0227">DNA damage</keyword>
<keyword id="KW-0234">DNA repair</keyword>
<keyword id="KW-0238">DNA-binding</keyword>
<keyword id="KW-0347">Helicase</keyword>
<keyword id="KW-0378">Hydrolase</keyword>
<keyword id="KW-0547">Nucleotide-binding</keyword>
<keyword id="KW-0539">Nucleus</keyword>
<keyword id="KW-1185">Reference proteome</keyword>
<dbReference type="EC" id="3.6.4.12" evidence="1 2"/>
<dbReference type="EMBL" id="DS480526">
    <property type="protein sequence ID" value="EDO14649.1"/>
    <property type="molecule type" value="Genomic_DNA"/>
</dbReference>
<dbReference type="RefSeq" id="XP_001642507.1">
    <property type="nucleotide sequence ID" value="XM_001642457.1"/>
</dbReference>
<dbReference type="SMR" id="A7TSV4"/>
<dbReference type="FunCoup" id="A7TSV4">
    <property type="interactions" value="272"/>
</dbReference>
<dbReference type="STRING" id="436907.A7TSV4"/>
<dbReference type="GeneID" id="5542673"/>
<dbReference type="KEGG" id="vpo:Kpol_328p1"/>
<dbReference type="eggNOG" id="KOG0354">
    <property type="taxonomic scope" value="Eukaryota"/>
</dbReference>
<dbReference type="HOGENOM" id="CLU_002513_1_0_1"/>
<dbReference type="InParanoid" id="A7TSV4"/>
<dbReference type="OMA" id="EGIKWRN"/>
<dbReference type="OrthoDB" id="164902at2759"/>
<dbReference type="PhylomeDB" id="A7TSV4"/>
<dbReference type="Proteomes" id="UP000000267">
    <property type="component" value="Unassembled WGS sequence"/>
</dbReference>
<dbReference type="GO" id="GO:0005634">
    <property type="term" value="C:nucleus"/>
    <property type="evidence" value="ECO:0007669"/>
    <property type="project" value="UniProtKB-SubCell"/>
</dbReference>
<dbReference type="GO" id="GO:0043138">
    <property type="term" value="F:3'-5' DNA helicase activity"/>
    <property type="evidence" value="ECO:0007669"/>
    <property type="project" value="EnsemblFungi"/>
</dbReference>
<dbReference type="GO" id="GO:0005524">
    <property type="term" value="F:ATP binding"/>
    <property type="evidence" value="ECO:0007669"/>
    <property type="project" value="UniProtKB-KW"/>
</dbReference>
<dbReference type="GO" id="GO:0016887">
    <property type="term" value="F:ATP hydrolysis activity"/>
    <property type="evidence" value="ECO:0007669"/>
    <property type="project" value="RHEA"/>
</dbReference>
<dbReference type="GO" id="GO:0033677">
    <property type="term" value="F:DNA/RNA helicase activity"/>
    <property type="evidence" value="ECO:0007669"/>
    <property type="project" value="EnsemblFungi"/>
</dbReference>
<dbReference type="GO" id="GO:0070336">
    <property type="term" value="F:flap-structured DNA binding"/>
    <property type="evidence" value="ECO:0007669"/>
    <property type="project" value="EnsemblFungi"/>
</dbReference>
<dbReference type="GO" id="GO:0000400">
    <property type="term" value="F:four-way junction DNA binding"/>
    <property type="evidence" value="ECO:0007669"/>
    <property type="project" value="TreeGrafter"/>
</dbReference>
<dbReference type="GO" id="GO:0009378">
    <property type="term" value="F:four-way junction helicase activity"/>
    <property type="evidence" value="ECO:0007669"/>
    <property type="project" value="TreeGrafter"/>
</dbReference>
<dbReference type="GO" id="GO:0033567">
    <property type="term" value="P:DNA replication, Okazaki fragment processing"/>
    <property type="evidence" value="ECO:0007669"/>
    <property type="project" value="EnsemblFungi"/>
</dbReference>
<dbReference type="GO" id="GO:0007535">
    <property type="term" value="P:donor selection"/>
    <property type="evidence" value="ECO:0007669"/>
    <property type="project" value="EnsemblFungi"/>
</dbReference>
<dbReference type="GO" id="GO:0045003">
    <property type="term" value="P:double-strand break repair via synthesis-dependent strand annealing"/>
    <property type="evidence" value="ECO:0007669"/>
    <property type="project" value="TreeGrafter"/>
</dbReference>
<dbReference type="GO" id="GO:0036297">
    <property type="term" value="P:interstrand cross-link repair"/>
    <property type="evidence" value="ECO:0007669"/>
    <property type="project" value="EnsemblFungi"/>
</dbReference>
<dbReference type="GO" id="GO:0060543">
    <property type="term" value="P:negative regulation of strand invasion"/>
    <property type="evidence" value="ECO:0007669"/>
    <property type="project" value="EnsemblFungi"/>
</dbReference>
<dbReference type="CDD" id="cd18033">
    <property type="entry name" value="DEXDc_FANCM"/>
    <property type="match status" value="1"/>
</dbReference>
<dbReference type="CDD" id="cd12091">
    <property type="entry name" value="FANCM_ID"/>
    <property type="match status" value="1"/>
</dbReference>
<dbReference type="FunFam" id="3.40.50.300:FF:000861">
    <property type="entry name" value="Fanconi anemia, complementation group M"/>
    <property type="match status" value="1"/>
</dbReference>
<dbReference type="Gene3D" id="3.40.50.300">
    <property type="entry name" value="P-loop containing nucleotide triphosphate hydrolases"/>
    <property type="match status" value="2"/>
</dbReference>
<dbReference type="InterPro" id="IPR039686">
    <property type="entry name" value="FANCM/Mph1-like_ID"/>
</dbReference>
<dbReference type="InterPro" id="IPR044749">
    <property type="entry name" value="FANCM_DEXDc"/>
</dbReference>
<dbReference type="InterPro" id="IPR006935">
    <property type="entry name" value="Helicase/UvrB_N"/>
</dbReference>
<dbReference type="InterPro" id="IPR014001">
    <property type="entry name" value="Helicase_ATP-bd"/>
</dbReference>
<dbReference type="InterPro" id="IPR001650">
    <property type="entry name" value="Helicase_C-like"/>
</dbReference>
<dbReference type="InterPro" id="IPR027417">
    <property type="entry name" value="P-loop_NTPase"/>
</dbReference>
<dbReference type="PANTHER" id="PTHR14025">
    <property type="entry name" value="FANCONI ANEMIA GROUP M FANCM FAMILY MEMBER"/>
    <property type="match status" value="1"/>
</dbReference>
<dbReference type="PANTHER" id="PTHR14025:SF20">
    <property type="entry name" value="FANCONI ANEMIA GROUP M PROTEIN"/>
    <property type="match status" value="1"/>
</dbReference>
<dbReference type="Pfam" id="PF00271">
    <property type="entry name" value="Helicase_C"/>
    <property type="match status" value="1"/>
</dbReference>
<dbReference type="Pfam" id="PF04851">
    <property type="entry name" value="ResIII"/>
    <property type="match status" value="1"/>
</dbReference>
<dbReference type="SMART" id="SM00487">
    <property type="entry name" value="DEXDc"/>
    <property type="match status" value="1"/>
</dbReference>
<dbReference type="SMART" id="SM00490">
    <property type="entry name" value="HELICc"/>
    <property type="match status" value="1"/>
</dbReference>
<dbReference type="SUPFAM" id="SSF52540">
    <property type="entry name" value="P-loop containing nucleoside triphosphate hydrolases"/>
    <property type="match status" value="1"/>
</dbReference>
<dbReference type="PROSITE" id="PS51192">
    <property type="entry name" value="HELICASE_ATP_BIND_1"/>
    <property type="match status" value="1"/>
</dbReference>
<dbReference type="PROSITE" id="PS51194">
    <property type="entry name" value="HELICASE_CTER"/>
    <property type="match status" value="1"/>
</dbReference>
<protein>
    <recommendedName>
        <fullName evidence="1">ATP-dependent DNA helicase MPH1</fullName>
        <ecNumber evidence="1 2">3.6.4.12</ecNumber>
    </recommendedName>
    <alternativeName>
        <fullName evidence="2">FANCM-like protein 1</fullName>
    </alternativeName>
</protein>
<gene>
    <name evidence="1" type="primary">MPH1</name>
    <name type="ORF">Kpol_328p1</name>
</gene>
<feature type="chain" id="PRO_0000333381" description="ATP-dependent DNA helicase MPH1">
    <location>
        <begin position="1"/>
        <end position="1012"/>
    </location>
</feature>
<feature type="domain" description="Helicase ATP-binding" evidence="3">
    <location>
        <begin position="94"/>
        <end position="261"/>
    </location>
</feature>
<feature type="domain" description="Helicase C-terminal" evidence="4">
    <location>
        <begin position="430"/>
        <end position="654"/>
    </location>
</feature>
<feature type="region of interest" description="Disordered" evidence="5">
    <location>
        <begin position="493"/>
        <end position="555"/>
    </location>
</feature>
<feature type="short sequence motif" description="DEAH box" evidence="3">
    <location>
        <begin position="209"/>
        <end position="212"/>
    </location>
</feature>
<feature type="compositionally biased region" description="Basic residues" evidence="5">
    <location>
        <begin position="498"/>
        <end position="510"/>
    </location>
</feature>
<feature type="compositionally biased region" description="Basic and acidic residues" evidence="5">
    <location>
        <begin position="511"/>
        <end position="537"/>
    </location>
</feature>
<feature type="binding site" evidence="3">
    <location>
        <begin position="107"/>
        <end position="114"/>
    </location>
    <ligand>
        <name>ATP</name>
        <dbReference type="ChEBI" id="CHEBI:30616"/>
    </ligand>
</feature>